<reference key="1">
    <citation type="journal article" date="2004" name="Proc. Natl. Acad. Sci. U.S.A.">
        <title>Complete genomes of two clinical Staphylococcus aureus strains: evidence for the rapid evolution of virulence and drug resistance.</title>
        <authorList>
            <person name="Holden M.T.G."/>
            <person name="Feil E.J."/>
            <person name="Lindsay J.A."/>
            <person name="Peacock S.J."/>
            <person name="Day N.P.J."/>
            <person name="Enright M.C."/>
            <person name="Foster T.J."/>
            <person name="Moore C.E."/>
            <person name="Hurst L."/>
            <person name="Atkin R."/>
            <person name="Barron A."/>
            <person name="Bason N."/>
            <person name="Bentley S.D."/>
            <person name="Chillingworth C."/>
            <person name="Chillingworth T."/>
            <person name="Churcher C."/>
            <person name="Clark L."/>
            <person name="Corton C."/>
            <person name="Cronin A."/>
            <person name="Doggett J."/>
            <person name="Dowd L."/>
            <person name="Feltwell T."/>
            <person name="Hance Z."/>
            <person name="Harris B."/>
            <person name="Hauser H."/>
            <person name="Holroyd S."/>
            <person name="Jagels K."/>
            <person name="James K.D."/>
            <person name="Lennard N."/>
            <person name="Line A."/>
            <person name="Mayes R."/>
            <person name="Moule S."/>
            <person name="Mungall K."/>
            <person name="Ormond D."/>
            <person name="Quail M.A."/>
            <person name="Rabbinowitsch E."/>
            <person name="Rutherford K.M."/>
            <person name="Sanders M."/>
            <person name="Sharp S."/>
            <person name="Simmonds M."/>
            <person name="Stevens K."/>
            <person name="Whitehead S."/>
            <person name="Barrell B.G."/>
            <person name="Spratt B.G."/>
            <person name="Parkhill J."/>
        </authorList>
    </citation>
    <scope>NUCLEOTIDE SEQUENCE [LARGE SCALE GENOMIC DNA]</scope>
    <source>
        <strain>MRSA252</strain>
    </source>
</reference>
<proteinExistence type="inferred from homology"/>
<keyword id="KW-0046">Antibiotic resistance</keyword>
<keyword id="KW-1003">Cell membrane</keyword>
<keyword id="KW-0133">Cell shape</keyword>
<keyword id="KW-0961">Cell wall biogenesis/degradation</keyword>
<keyword id="KW-0378">Hydrolase</keyword>
<keyword id="KW-0472">Membrane</keyword>
<keyword id="KW-0573">Peptidoglycan synthesis</keyword>
<keyword id="KW-0812">Transmembrane</keyword>
<keyword id="KW-1133">Transmembrane helix</keyword>
<feature type="chain" id="PRO_0000151201" description="Undecaprenyl-diphosphatase">
    <location>
        <begin position="1"/>
        <end position="291"/>
    </location>
</feature>
<feature type="transmembrane region" description="Helical" evidence="1">
    <location>
        <begin position="1"/>
        <end position="21"/>
    </location>
</feature>
<feature type="transmembrane region" description="Helical" evidence="1">
    <location>
        <begin position="48"/>
        <end position="68"/>
    </location>
</feature>
<feature type="transmembrane region" description="Helical" evidence="1">
    <location>
        <begin position="102"/>
        <end position="122"/>
    </location>
</feature>
<feature type="transmembrane region" description="Helical" evidence="1">
    <location>
        <begin position="126"/>
        <end position="146"/>
    </location>
</feature>
<feature type="transmembrane region" description="Helical" evidence="1">
    <location>
        <begin position="162"/>
        <end position="182"/>
    </location>
</feature>
<feature type="transmembrane region" description="Helical" evidence="1">
    <location>
        <begin position="203"/>
        <end position="223"/>
    </location>
</feature>
<feature type="transmembrane region" description="Helical" evidence="1">
    <location>
        <begin position="231"/>
        <end position="251"/>
    </location>
</feature>
<feature type="transmembrane region" description="Helical" evidence="1">
    <location>
        <begin position="267"/>
        <end position="287"/>
    </location>
</feature>
<protein>
    <recommendedName>
        <fullName evidence="1">Undecaprenyl-diphosphatase</fullName>
        <ecNumber evidence="1">3.6.1.27</ecNumber>
    </recommendedName>
    <alternativeName>
        <fullName evidence="1">Bacitracin resistance protein</fullName>
    </alternativeName>
    <alternativeName>
        <fullName evidence="1">Undecaprenyl pyrophosphate phosphatase</fullName>
    </alternativeName>
</protein>
<accession>Q6GIV9</accession>
<name>UPPP_STAAR</name>
<evidence type="ECO:0000255" key="1">
    <source>
        <dbReference type="HAMAP-Rule" id="MF_01006"/>
    </source>
</evidence>
<sequence>MFIIELIKGIILGIVEGLTEFAPVSSTGHMILVDDMWLKSSEFLGSQSAFTFKIVIQLGSVFAAAWVFRERFLEILHIGKHKHVEGDNNQQRRSKPRRLNLLHVLVGMVPAGILGLLFDDFIEEHLFSVPTVMIGLFVGAIYMIIADKYSAKVKNPQTVDQISYFQAFVIGISQAVAMWPGFSRSGSTISTGVLMKLNHKAASDFTFIMAVPIMLAASGLSLLKHYQDIQIADIPFYILGFLAAFTVGLIAIKTFLHLINKIKLIPFAIYRIVLVIFIAILYFGFGIGKGI</sequence>
<comment type="function">
    <text evidence="1">Catalyzes the dephosphorylation of undecaprenyl diphosphate (UPP). Confers resistance to bacitracin.</text>
</comment>
<comment type="catalytic activity">
    <reaction evidence="1">
        <text>di-trans,octa-cis-undecaprenyl diphosphate + H2O = di-trans,octa-cis-undecaprenyl phosphate + phosphate + H(+)</text>
        <dbReference type="Rhea" id="RHEA:28094"/>
        <dbReference type="ChEBI" id="CHEBI:15377"/>
        <dbReference type="ChEBI" id="CHEBI:15378"/>
        <dbReference type="ChEBI" id="CHEBI:43474"/>
        <dbReference type="ChEBI" id="CHEBI:58405"/>
        <dbReference type="ChEBI" id="CHEBI:60392"/>
        <dbReference type="EC" id="3.6.1.27"/>
    </reaction>
</comment>
<comment type="subcellular location">
    <subcellularLocation>
        <location evidence="1">Cell membrane</location>
        <topology evidence="1">Multi-pass membrane protein</topology>
    </subcellularLocation>
</comment>
<comment type="miscellaneous">
    <text>Bacitracin is thought to be involved in the inhibition of peptidoglycan synthesis by sequestering undecaprenyl diphosphate, thereby reducing the pool of lipid carrier available.</text>
</comment>
<comment type="similarity">
    <text evidence="1">Belongs to the UppP family.</text>
</comment>
<organism>
    <name type="scientific">Staphylococcus aureus (strain MRSA252)</name>
    <dbReference type="NCBI Taxonomy" id="282458"/>
    <lineage>
        <taxon>Bacteria</taxon>
        <taxon>Bacillati</taxon>
        <taxon>Bacillota</taxon>
        <taxon>Bacilli</taxon>
        <taxon>Bacillales</taxon>
        <taxon>Staphylococcaceae</taxon>
        <taxon>Staphylococcus</taxon>
    </lineage>
</organism>
<dbReference type="EC" id="3.6.1.27" evidence="1"/>
<dbReference type="EMBL" id="BX571856">
    <property type="protein sequence ID" value="CAG39746.1"/>
    <property type="molecule type" value="Genomic_DNA"/>
</dbReference>
<dbReference type="RefSeq" id="WP_000469883.1">
    <property type="nucleotide sequence ID" value="NC_002952.2"/>
</dbReference>
<dbReference type="SMR" id="Q6GIV9"/>
<dbReference type="KEGG" id="sar:SAR0736"/>
<dbReference type="HOGENOM" id="CLU_060296_2_0_9"/>
<dbReference type="Proteomes" id="UP000000596">
    <property type="component" value="Chromosome"/>
</dbReference>
<dbReference type="GO" id="GO:0005886">
    <property type="term" value="C:plasma membrane"/>
    <property type="evidence" value="ECO:0007669"/>
    <property type="project" value="UniProtKB-SubCell"/>
</dbReference>
<dbReference type="GO" id="GO:0050380">
    <property type="term" value="F:undecaprenyl-diphosphatase activity"/>
    <property type="evidence" value="ECO:0007669"/>
    <property type="project" value="UniProtKB-UniRule"/>
</dbReference>
<dbReference type="GO" id="GO:0071555">
    <property type="term" value="P:cell wall organization"/>
    <property type="evidence" value="ECO:0007669"/>
    <property type="project" value="UniProtKB-KW"/>
</dbReference>
<dbReference type="GO" id="GO:0009252">
    <property type="term" value="P:peptidoglycan biosynthetic process"/>
    <property type="evidence" value="ECO:0007669"/>
    <property type="project" value="UniProtKB-KW"/>
</dbReference>
<dbReference type="GO" id="GO:0008360">
    <property type="term" value="P:regulation of cell shape"/>
    <property type="evidence" value="ECO:0007669"/>
    <property type="project" value="UniProtKB-KW"/>
</dbReference>
<dbReference type="GO" id="GO:0046677">
    <property type="term" value="P:response to antibiotic"/>
    <property type="evidence" value="ECO:0007669"/>
    <property type="project" value="UniProtKB-UniRule"/>
</dbReference>
<dbReference type="HAMAP" id="MF_01006">
    <property type="entry name" value="Undec_diphosphatase"/>
    <property type="match status" value="1"/>
</dbReference>
<dbReference type="InterPro" id="IPR003824">
    <property type="entry name" value="UppP"/>
</dbReference>
<dbReference type="NCBIfam" id="NF001390">
    <property type="entry name" value="PRK00281.1-4"/>
    <property type="match status" value="1"/>
</dbReference>
<dbReference type="NCBIfam" id="TIGR00753">
    <property type="entry name" value="undec_PP_bacA"/>
    <property type="match status" value="1"/>
</dbReference>
<dbReference type="PANTHER" id="PTHR30622">
    <property type="entry name" value="UNDECAPRENYL-DIPHOSPHATASE"/>
    <property type="match status" value="1"/>
</dbReference>
<dbReference type="PANTHER" id="PTHR30622:SF3">
    <property type="entry name" value="UNDECAPRENYL-DIPHOSPHATASE"/>
    <property type="match status" value="1"/>
</dbReference>
<dbReference type="Pfam" id="PF02673">
    <property type="entry name" value="BacA"/>
    <property type="match status" value="1"/>
</dbReference>
<gene>
    <name evidence="1" type="primary">uppP</name>
    <name type="synonym">bacA</name>
    <name type="synonym">upk</name>
    <name type="ordered locus">SAR0736</name>
</gene>